<evidence type="ECO:0000250" key="1">
    <source>
        <dbReference type="UniProtKB" id="P02086"/>
    </source>
</evidence>
<evidence type="ECO:0000250" key="2">
    <source>
        <dbReference type="UniProtKB" id="P68871"/>
    </source>
</evidence>
<evidence type="ECO:0000255" key="3">
    <source>
        <dbReference type="PROSITE-ProRule" id="PRU00238"/>
    </source>
</evidence>
<sequence length="146" mass="15920">VHLTADEKAAVTALWGKVNVDEVGGEALGRLLVVYPWTQRFFDSFGDLSSPDAVMGNPKVKAHGKKVLNSFSDGLKNLDNLKGTFAKLSELHCDKLHVDPENFKLLGNVLVCVLAHHFGKEFTPQVQAAYQKVVAGVANALAHKYH</sequence>
<feature type="chain" id="PRO_0000052882" description="Hemoglobin subunit beta">
    <location>
        <begin position="1"/>
        <end position="146"/>
    </location>
</feature>
<feature type="domain" description="Globin" evidence="3">
    <location>
        <begin position="2"/>
        <end position="146"/>
    </location>
</feature>
<feature type="binding site" description="distal binding residue">
    <location>
        <position position="63"/>
    </location>
    <ligand>
        <name>heme b</name>
        <dbReference type="ChEBI" id="CHEBI:60344"/>
    </ligand>
    <ligandPart>
        <name>Fe</name>
        <dbReference type="ChEBI" id="CHEBI:18248"/>
    </ligandPart>
</feature>
<feature type="binding site" description="proximal binding residue">
    <location>
        <position position="92"/>
    </location>
    <ligand>
        <name>heme b</name>
        <dbReference type="ChEBI" id="CHEBI:60344"/>
    </ligand>
    <ligandPart>
        <name>Fe</name>
        <dbReference type="ChEBI" id="CHEBI:18248"/>
    </ligandPart>
</feature>
<feature type="modified residue" description="N-acetylvaline" evidence="1">
    <location>
        <position position="1"/>
    </location>
</feature>
<feature type="modified residue" description="Phosphothreonine" evidence="2">
    <location>
        <position position="12"/>
    </location>
</feature>
<feature type="modified residue" description="Phosphoserine" evidence="2">
    <location>
        <position position="44"/>
    </location>
</feature>
<feature type="modified residue" description="N6-acetyllysine" evidence="2">
    <location>
        <position position="59"/>
    </location>
</feature>
<feature type="modified residue" description="N6-acetyllysine" evidence="2">
    <location>
        <position position="82"/>
    </location>
</feature>
<feature type="modified residue" description="S-nitrosocysteine" evidence="2">
    <location>
        <position position="93"/>
    </location>
</feature>
<feature type="modified residue" description="N6-acetyllysine" evidence="2">
    <location>
        <position position="144"/>
    </location>
</feature>
<accession>P68047</accession>
<accession>P10779</accession>
<organism>
    <name type="scientific">Arctocephalus galapagoensis</name>
    <name type="common">Galapagoes fur seal</name>
    <name type="synonym">Arctocephalus australis galapagoensis</name>
    <dbReference type="NCBI Taxonomy" id="30584"/>
    <lineage>
        <taxon>Eukaryota</taxon>
        <taxon>Metazoa</taxon>
        <taxon>Chordata</taxon>
        <taxon>Craniata</taxon>
        <taxon>Vertebrata</taxon>
        <taxon>Euteleostomi</taxon>
        <taxon>Mammalia</taxon>
        <taxon>Eutheria</taxon>
        <taxon>Laurasiatheria</taxon>
        <taxon>Carnivora</taxon>
        <taxon>Caniformia</taxon>
        <taxon>Pinnipedia</taxon>
        <taxon>Otariidae</taxon>
        <taxon>Arctocephalus</taxon>
    </lineage>
</organism>
<gene>
    <name type="primary">HBB</name>
</gene>
<protein>
    <recommendedName>
        <fullName>Hemoglobin subunit beta</fullName>
    </recommendedName>
    <alternativeName>
        <fullName>Beta-globin</fullName>
    </alternativeName>
    <alternativeName>
        <fullName>Hemoglobin beta chain</fullName>
    </alternativeName>
</protein>
<dbReference type="PIR" id="B61434">
    <property type="entry name" value="B61434"/>
</dbReference>
<dbReference type="SMR" id="P68047"/>
<dbReference type="GO" id="GO:0072562">
    <property type="term" value="C:blood microparticle"/>
    <property type="evidence" value="ECO:0007669"/>
    <property type="project" value="TreeGrafter"/>
</dbReference>
<dbReference type="GO" id="GO:0031838">
    <property type="term" value="C:haptoglobin-hemoglobin complex"/>
    <property type="evidence" value="ECO:0007669"/>
    <property type="project" value="TreeGrafter"/>
</dbReference>
<dbReference type="GO" id="GO:0005833">
    <property type="term" value="C:hemoglobin complex"/>
    <property type="evidence" value="ECO:0007669"/>
    <property type="project" value="InterPro"/>
</dbReference>
<dbReference type="GO" id="GO:0031720">
    <property type="term" value="F:haptoglobin binding"/>
    <property type="evidence" value="ECO:0007669"/>
    <property type="project" value="TreeGrafter"/>
</dbReference>
<dbReference type="GO" id="GO:0020037">
    <property type="term" value="F:heme binding"/>
    <property type="evidence" value="ECO:0007669"/>
    <property type="project" value="InterPro"/>
</dbReference>
<dbReference type="GO" id="GO:0031721">
    <property type="term" value="F:hemoglobin alpha binding"/>
    <property type="evidence" value="ECO:0007669"/>
    <property type="project" value="TreeGrafter"/>
</dbReference>
<dbReference type="GO" id="GO:0046872">
    <property type="term" value="F:metal ion binding"/>
    <property type="evidence" value="ECO:0007669"/>
    <property type="project" value="UniProtKB-KW"/>
</dbReference>
<dbReference type="GO" id="GO:0043177">
    <property type="term" value="F:organic acid binding"/>
    <property type="evidence" value="ECO:0007669"/>
    <property type="project" value="TreeGrafter"/>
</dbReference>
<dbReference type="GO" id="GO:0019825">
    <property type="term" value="F:oxygen binding"/>
    <property type="evidence" value="ECO:0007669"/>
    <property type="project" value="InterPro"/>
</dbReference>
<dbReference type="GO" id="GO:0005344">
    <property type="term" value="F:oxygen carrier activity"/>
    <property type="evidence" value="ECO:0007669"/>
    <property type="project" value="UniProtKB-KW"/>
</dbReference>
<dbReference type="GO" id="GO:0004601">
    <property type="term" value="F:peroxidase activity"/>
    <property type="evidence" value="ECO:0007669"/>
    <property type="project" value="TreeGrafter"/>
</dbReference>
<dbReference type="GO" id="GO:0042744">
    <property type="term" value="P:hydrogen peroxide catabolic process"/>
    <property type="evidence" value="ECO:0007669"/>
    <property type="project" value="TreeGrafter"/>
</dbReference>
<dbReference type="CDD" id="cd08925">
    <property type="entry name" value="Hb-beta-like"/>
    <property type="match status" value="1"/>
</dbReference>
<dbReference type="FunFam" id="1.10.490.10:FF:000001">
    <property type="entry name" value="Hemoglobin subunit beta"/>
    <property type="match status" value="1"/>
</dbReference>
<dbReference type="Gene3D" id="1.10.490.10">
    <property type="entry name" value="Globins"/>
    <property type="match status" value="1"/>
</dbReference>
<dbReference type="InterPro" id="IPR000971">
    <property type="entry name" value="Globin"/>
</dbReference>
<dbReference type="InterPro" id="IPR009050">
    <property type="entry name" value="Globin-like_sf"/>
</dbReference>
<dbReference type="InterPro" id="IPR012292">
    <property type="entry name" value="Globin/Proto"/>
</dbReference>
<dbReference type="InterPro" id="IPR002337">
    <property type="entry name" value="Hemoglobin_b"/>
</dbReference>
<dbReference type="InterPro" id="IPR050056">
    <property type="entry name" value="Hemoglobin_oxygen_transport"/>
</dbReference>
<dbReference type="PANTHER" id="PTHR11442">
    <property type="entry name" value="HEMOGLOBIN FAMILY MEMBER"/>
    <property type="match status" value="1"/>
</dbReference>
<dbReference type="PANTHER" id="PTHR11442:SF42">
    <property type="entry name" value="HEMOGLOBIN SUBUNIT BETA"/>
    <property type="match status" value="1"/>
</dbReference>
<dbReference type="Pfam" id="PF00042">
    <property type="entry name" value="Globin"/>
    <property type="match status" value="1"/>
</dbReference>
<dbReference type="PRINTS" id="PR00814">
    <property type="entry name" value="BETAHAEM"/>
</dbReference>
<dbReference type="SUPFAM" id="SSF46458">
    <property type="entry name" value="Globin-like"/>
    <property type="match status" value="1"/>
</dbReference>
<dbReference type="PROSITE" id="PS01033">
    <property type="entry name" value="GLOBIN"/>
    <property type="match status" value="1"/>
</dbReference>
<name>HBB_ARCGA</name>
<keyword id="KW-0007">Acetylation</keyword>
<keyword id="KW-0903">Direct protein sequencing</keyword>
<keyword id="KW-0349">Heme</keyword>
<keyword id="KW-0408">Iron</keyword>
<keyword id="KW-0479">Metal-binding</keyword>
<keyword id="KW-0561">Oxygen transport</keyword>
<keyword id="KW-0597">Phosphoprotein</keyword>
<keyword id="KW-0702">S-nitrosylation</keyword>
<keyword id="KW-0813">Transport</keyword>
<proteinExistence type="evidence at protein level"/>
<comment type="function">
    <text>Involved in oxygen transport from the lung to the various peripheral tissues.</text>
</comment>
<comment type="subunit">
    <text>Heterotetramer of two alpha chains and two beta chains.</text>
</comment>
<comment type="tissue specificity">
    <text>Red blood cells.</text>
</comment>
<comment type="similarity">
    <text evidence="3">Belongs to the globin family.</text>
</comment>
<reference key="1">
    <citation type="journal article" date="1991" name="J. Protein Chem.">
        <title>The complete primary structure of the marine Carnivora, galapagoes fur seal (Arctocephalus galapagoensis, Otariidae) hemoglobins.</title>
        <authorList>
            <person name="Jahan M."/>
            <person name="Ahmed A."/>
            <person name="Trillmich F."/>
            <person name="Braunitzer G."/>
        </authorList>
    </citation>
    <scope>PROTEIN SEQUENCE</scope>
</reference>